<accession>A8YVZ5</accession>
<name>PYRC_LACH4</name>
<gene>
    <name evidence="1" type="primary">pyrC</name>
    <name type="ordered locus">lhv_1445</name>
</gene>
<dbReference type="EC" id="3.5.2.3" evidence="1"/>
<dbReference type="EMBL" id="CP000517">
    <property type="protein sequence ID" value="ABX27424.1"/>
    <property type="molecule type" value="Genomic_DNA"/>
</dbReference>
<dbReference type="RefSeq" id="WP_012212047.1">
    <property type="nucleotide sequence ID" value="NC_010080.1"/>
</dbReference>
<dbReference type="SMR" id="A8YVZ5"/>
<dbReference type="KEGG" id="lhe:lhv_1445"/>
<dbReference type="eggNOG" id="COG0044">
    <property type="taxonomic scope" value="Bacteria"/>
</dbReference>
<dbReference type="HOGENOM" id="CLU_015572_1_0_9"/>
<dbReference type="UniPathway" id="UPA00070">
    <property type="reaction ID" value="UER00117"/>
</dbReference>
<dbReference type="Proteomes" id="UP000000790">
    <property type="component" value="Chromosome"/>
</dbReference>
<dbReference type="GO" id="GO:0005737">
    <property type="term" value="C:cytoplasm"/>
    <property type="evidence" value="ECO:0007669"/>
    <property type="project" value="TreeGrafter"/>
</dbReference>
<dbReference type="GO" id="GO:0004038">
    <property type="term" value="F:allantoinase activity"/>
    <property type="evidence" value="ECO:0007669"/>
    <property type="project" value="TreeGrafter"/>
</dbReference>
<dbReference type="GO" id="GO:0004151">
    <property type="term" value="F:dihydroorotase activity"/>
    <property type="evidence" value="ECO:0007669"/>
    <property type="project" value="UniProtKB-UniRule"/>
</dbReference>
<dbReference type="GO" id="GO:0008270">
    <property type="term" value="F:zinc ion binding"/>
    <property type="evidence" value="ECO:0007669"/>
    <property type="project" value="UniProtKB-UniRule"/>
</dbReference>
<dbReference type="GO" id="GO:0044205">
    <property type="term" value="P:'de novo' UMP biosynthetic process"/>
    <property type="evidence" value="ECO:0007669"/>
    <property type="project" value="UniProtKB-UniRule"/>
</dbReference>
<dbReference type="GO" id="GO:0006145">
    <property type="term" value="P:purine nucleobase catabolic process"/>
    <property type="evidence" value="ECO:0007669"/>
    <property type="project" value="TreeGrafter"/>
</dbReference>
<dbReference type="CDD" id="cd01317">
    <property type="entry name" value="DHOase_IIa"/>
    <property type="match status" value="1"/>
</dbReference>
<dbReference type="Gene3D" id="3.20.20.140">
    <property type="entry name" value="Metal-dependent hydrolases"/>
    <property type="match status" value="1"/>
</dbReference>
<dbReference type="HAMAP" id="MF_00220_B">
    <property type="entry name" value="PyrC_classI_B"/>
    <property type="match status" value="1"/>
</dbReference>
<dbReference type="InterPro" id="IPR006680">
    <property type="entry name" value="Amidohydro-rel"/>
</dbReference>
<dbReference type="InterPro" id="IPR004722">
    <property type="entry name" value="DHOase"/>
</dbReference>
<dbReference type="InterPro" id="IPR050138">
    <property type="entry name" value="DHOase/Allantoinase_Hydrolase"/>
</dbReference>
<dbReference type="InterPro" id="IPR002195">
    <property type="entry name" value="Dihydroorotase_CS"/>
</dbReference>
<dbReference type="InterPro" id="IPR011059">
    <property type="entry name" value="Metal-dep_hydrolase_composite"/>
</dbReference>
<dbReference type="InterPro" id="IPR032466">
    <property type="entry name" value="Metal_Hydrolase"/>
</dbReference>
<dbReference type="NCBIfam" id="NF006837">
    <property type="entry name" value="PRK09357.1-2"/>
    <property type="match status" value="1"/>
</dbReference>
<dbReference type="NCBIfam" id="TIGR00857">
    <property type="entry name" value="pyrC_multi"/>
    <property type="match status" value="1"/>
</dbReference>
<dbReference type="PANTHER" id="PTHR43668">
    <property type="entry name" value="ALLANTOINASE"/>
    <property type="match status" value="1"/>
</dbReference>
<dbReference type="PANTHER" id="PTHR43668:SF2">
    <property type="entry name" value="ALLANTOINASE"/>
    <property type="match status" value="1"/>
</dbReference>
<dbReference type="Pfam" id="PF01979">
    <property type="entry name" value="Amidohydro_1"/>
    <property type="match status" value="1"/>
</dbReference>
<dbReference type="SUPFAM" id="SSF51338">
    <property type="entry name" value="Composite domain of metallo-dependent hydrolases"/>
    <property type="match status" value="1"/>
</dbReference>
<dbReference type="SUPFAM" id="SSF51556">
    <property type="entry name" value="Metallo-dependent hydrolases"/>
    <property type="match status" value="1"/>
</dbReference>
<dbReference type="PROSITE" id="PS00483">
    <property type="entry name" value="DIHYDROOROTASE_2"/>
    <property type="match status" value="1"/>
</dbReference>
<reference key="1">
    <citation type="journal article" date="2008" name="J. Bacteriol.">
        <title>Genome sequence of Lactobacillus helveticus: an organism distinguished by selective gene loss and IS element expansion.</title>
        <authorList>
            <person name="Callanan M."/>
            <person name="Kaleta P."/>
            <person name="O'Callaghan J."/>
            <person name="O'Sullivan O."/>
            <person name="Jordan K."/>
            <person name="McAuliffe O."/>
            <person name="Sangrador-Vegas A."/>
            <person name="Slattery L."/>
            <person name="Fitzgerald G.F."/>
            <person name="Beresford T."/>
            <person name="Ross R.P."/>
        </authorList>
    </citation>
    <scope>NUCLEOTIDE SEQUENCE [LARGE SCALE GENOMIC DNA]</scope>
    <source>
        <strain>DPC 4571</strain>
    </source>
</reference>
<feature type="chain" id="PRO_1000071755" description="Dihydroorotase">
    <location>
        <begin position="1"/>
        <end position="425"/>
    </location>
</feature>
<feature type="active site" evidence="1">
    <location>
        <position position="301"/>
    </location>
</feature>
<feature type="binding site" evidence="1">
    <location>
        <position position="56"/>
    </location>
    <ligand>
        <name>Zn(2+)</name>
        <dbReference type="ChEBI" id="CHEBI:29105"/>
        <label>1</label>
    </ligand>
</feature>
<feature type="binding site" evidence="1">
    <location>
        <begin position="58"/>
        <end position="60"/>
    </location>
    <ligand>
        <name>substrate</name>
    </ligand>
</feature>
<feature type="binding site" evidence="1">
    <location>
        <position position="58"/>
    </location>
    <ligand>
        <name>Zn(2+)</name>
        <dbReference type="ChEBI" id="CHEBI:29105"/>
        <label>1</label>
    </ligand>
</feature>
<feature type="binding site" evidence="1">
    <location>
        <position position="90"/>
    </location>
    <ligand>
        <name>substrate</name>
    </ligand>
</feature>
<feature type="binding site" evidence="1">
    <location>
        <position position="148"/>
    </location>
    <ligand>
        <name>Zn(2+)</name>
        <dbReference type="ChEBI" id="CHEBI:29105"/>
        <label>1</label>
    </ligand>
</feature>
<feature type="binding site" evidence="1">
    <location>
        <position position="148"/>
    </location>
    <ligand>
        <name>Zn(2+)</name>
        <dbReference type="ChEBI" id="CHEBI:29105"/>
        <label>2</label>
    </ligand>
</feature>
<feature type="binding site" evidence="1">
    <location>
        <position position="175"/>
    </location>
    <ligand>
        <name>Zn(2+)</name>
        <dbReference type="ChEBI" id="CHEBI:29105"/>
        <label>2</label>
    </ligand>
</feature>
<feature type="binding site" evidence="1">
    <location>
        <position position="228"/>
    </location>
    <ligand>
        <name>Zn(2+)</name>
        <dbReference type="ChEBI" id="CHEBI:29105"/>
        <label>2</label>
    </ligand>
</feature>
<feature type="binding site" evidence="1">
    <location>
        <position position="274"/>
    </location>
    <ligand>
        <name>substrate</name>
    </ligand>
</feature>
<feature type="binding site" evidence="1">
    <location>
        <position position="301"/>
    </location>
    <ligand>
        <name>Zn(2+)</name>
        <dbReference type="ChEBI" id="CHEBI:29105"/>
        <label>1</label>
    </ligand>
</feature>
<feature type="binding site" evidence="1">
    <location>
        <position position="305"/>
    </location>
    <ligand>
        <name>substrate</name>
    </ligand>
</feature>
<feature type="binding site" evidence="1">
    <location>
        <begin position="319"/>
        <end position="320"/>
    </location>
    <ligand>
        <name>substrate</name>
    </ligand>
</feature>
<protein>
    <recommendedName>
        <fullName evidence="1">Dihydroorotase</fullName>
        <shortName evidence="1">DHOase</shortName>
        <ecNumber evidence="1">3.5.2.3</ecNumber>
    </recommendedName>
</protein>
<evidence type="ECO:0000255" key="1">
    <source>
        <dbReference type="HAMAP-Rule" id="MF_00220"/>
    </source>
</evidence>
<keyword id="KW-0378">Hydrolase</keyword>
<keyword id="KW-0479">Metal-binding</keyword>
<keyword id="KW-0665">Pyrimidine biosynthesis</keyword>
<keyword id="KW-0862">Zinc</keyword>
<organism>
    <name type="scientific">Lactobacillus helveticus (strain DPC 4571)</name>
    <dbReference type="NCBI Taxonomy" id="405566"/>
    <lineage>
        <taxon>Bacteria</taxon>
        <taxon>Bacillati</taxon>
        <taxon>Bacillota</taxon>
        <taxon>Bacilli</taxon>
        <taxon>Lactobacillales</taxon>
        <taxon>Lactobacillaceae</taxon>
        <taxon>Lactobacillus</taxon>
    </lineage>
</organism>
<sequence>MQTVIKNGTVYQNGRLIHADVLIEDQKIKAIGTDLTGDKVIDATGKLVSPGLVDVHVHYRDPGQTYKEDIETGSKAAAHGGFTTVGAMPNVTPVPDTPDLMKKMVQENKQKGIVHIFQYGPITKNETTDELPDYAALKKAGAFALSNDGHGVQTAQTMYLAMQEAKKNDLIVAAHAQDDSLFNHGIVNEGEKAKELNLPPVTELAETTQIARDLLLAEKTGVHYHICHVSTKTSVELVRMAKACGINVTCEAAPHHLLLTEDDIPKDNGYYKMNPPLRSKEDQAALLVGLLDGTIDLIATDHAPHAKQEKQGGMQNAAFGITGSETAFSTLYTKFVKEDKVFTLEQLLSWLSDQPAKVFGLKKAGVLEPGCPADVAIFDLEHETELKEKDYQSKGINTPFTGQKIYGATVMTMVDGEVVYQRGEK</sequence>
<comment type="function">
    <text evidence="1">Catalyzes the reversible cyclization of carbamoyl aspartate to dihydroorotate.</text>
</comment>
<comment type="catalytic activity">
    <reaction evidence="1">
        <text>(S)-dihydroorotate + H2O = N-carbamoyl-L-aspartate + H(+)</text>
        <dbReference type="Rhea" id="RHEA:24296"/>
        <dbReference type="ChEBI" id="CHEBI:15377"/>
        <dbReference type="ChEBI" id="CHEBI:15378"/>
        <dbReference type="ChEBI" id="CHEBI:30864"/>
        <dbReference type="ChEBI" id="CHEBI:32814"/>
        <dbReference type="EC" id="3.5.2.3"/>
    </reaction>
</comment>
<comment type="cofactor">
    <cofactor evidence="1">
        <name>Zn(2+)</name>
        <dbReference type="ChEBI" id="CHEBI:29105"/>
    </cofactor>
    <text evidence="1">Binds 2 Zn(2+) ions per subunit.</text>
</comment>
<comment type="pathway">
    <text evidence="1">Pyrimidine metabolism; UMP biosynthesis via de novo pathway; (S)-dihydroorotate from bicarbonate: step 3/3.</text>
</comment>
<comment type="similarity">
    <text evidence="1">Belongs to the metallo-dependent hydrolases superfamily. DHOase family. Class I DHOase subfamily.</text>
</comment>
<proteinExistence type="inferred from homology"/>